<evidence type="ECO:0000255" key="1">
    <source>
        <dbReference type="PROSITE-ProRule" id="PRU00175"/>
    </source>
</evidence>
<evidence type="ECO:0000255" key="2">
    <source>
        <dbReference type="PROSITE-ProRule" id="PRU00723"/>
    </source>
</evidence>
<evidence type="ECO:0000256" key="3">
    <source>
        <dbReference type="SAM" id="MobiDB-lite"/>
    </source>
</evidence>
<evidence type="ECO:0000305" key="4"/>
<comment type="sequence caution" evidence="4">
    <conflict type="erroneous gene model prediction">
        <sequence resource="EMBL-CDS" id="AAF97335"/>
    </conflict>
</comment>
<feature type="chain" id="PRO_0000371963" description="Zinc finger CCCH domain-containing protein 1">
    <location>
        <begin position="1"/>
        <end position="343"/>
    </location>
</feature>
<feature type="zinc finger region" description="C3H1-type" evidence="2">
    <location>
        <begin position="200"/>
        <end position="228"/>
    </location>
</feature>
<feature type="zinc finger region" description="RING-type" evidence="1">
    <location>
        <begin position="277"/>
        <end position="315"/>
    </location>
</feature>
<feature type="region of interest" description="Disordered" evidence="3">
    <location>
        <begin position="1"/>
        <end position="102"/>
    </location>
</feature>
<feature type="region of interest" description="Disordered" evidence="3">
    <location>
        <begin position="249"/>
        <end position="268"/>
    </location>
</feature>
<feature type="compositionally biased region" description="Low complexity" evidence="3">
    <location>
        <begin position="7"/>
        <end position="25"/>
    </location>
</feature>
<feature type="compositionally biased region" description="Basic residues" evidence="3">
    <location>
        <begin position="35"/>
        <end position="44"/>
    </location>
</feature>
<feature type="compositionally biased region" description="Low complexity" evidence="3">
    <location>
        <begin position="79"/>
        <end position="91"/>
    </location>
</feature>
<feature type="compositionally biased region" description="Acidic residues" evidence="3">
    <location>
        <begin position="255"/>
        <end position="268"/>
    </location>
</feature>
<feature type="sequence conflict" description="In Ref. 3; BAC42988." evidence="4" ref="3">
    <original>P</original>
    <variation>S</variation>
    <location>
        <position position="232"/>
    </location>
</feature>
<feature type="sequence conflict" description="In Ref. 3; BAC42988." evidence="4" ref="3">
    <original>H</original>
    <variation>R</variation>
    <location>
        <position position="304"/>
    </location>
</feature>
<proteinExistence type="evidence at transcript level"/>
<name>C3H1_ARATH</name>
<organism>
    <name type="scientific">Arabidopsis thaliana</name>
    <name type="common">Mouse-ear cress</name>
    <dbReference type="NCBI Taxonomy" id="3702"/>
    <lineage>
        <taxon>Eukaryota</taxon>
        <taxon>Viridiplantae</taxon>
        <taxon>Streptophyta</taxon>
        <taxon>Embryophyta</taxon>
        <taxon>Tracheophyta</taxon>
        <taxon>Spermatophyta</taxon>
        <taxon>Magnoliopsida</taxon>
        <taxon>eudicotyledons</taxon>
        <taxon>Gunneridae</taxon>
        <taxon>Pentapetalae</taxon>
        <taxon>rosids</taxon>
        <taxon>malvids</taxon>
        <taxon>Brassicales</taxon>
        <taxon>Brassicaceae</taxon>
        <taxon>Camelineae</taxon>
        <taxon>Arabidopsis</taxon>
    </lineage>
</organism>
<keyword id="KW-0238">DNA-binding</keyword>
<keyword id="KW-0479">Metal-binding</keyword>
<keyword id="KW-1185">Reference proteome</keyword>
<keyword id="KW-0862">Zinc</keyword>
<keyword id="KW-0863">Zinc-finger</keyword>
<gene>
    <name type="ordered locus">At1g01350</name>
    <name type="ORF">F6F3.14</name>
</gene>
<reference key="1">
    <citation type="journal article" date="2000" name="Nature">
        <title>Sequence and analysis of chromosome 1 of the plant Arabidopsis thaliana.</title>
        <authorList>
            <person name="Theologis A."/>
            <person name="Ecker J.R."/>
            <person name="Palm C.J."/>
            <person name="Federspiel N.A."/>
            <person name="Kaul S."/>
            <person name="White O."/>
            <person name="Alonso J."/>
            <person name="Altafi H."/>
            <person name="Araujo R."/>
            <person name="Bowman C.L."/>
            <person name="Brooks S.Y."/>
            <person name="Buehler E."/>
            <person name="Chan A."/>
            <person name="Chao Q."/>
            <person name="Chen H."/>
            <person name="Cheuk R.F."/>
            <person name="Chin C.W."/>
            <person name="Chung M.K."/>
            <person name="Conn L."/>
            <person name="Conway A.B."/>
            <person name="Conway A.R."/>
            <person name="Creasy T.H."/>
            <person name="Dewar K."/>
            <person name="Dunn P."/>
            <person name="Etgu P."/>
            <person name="Feldblyum T.V."/>
            <person name="Feng J.-D."/>
            <person name="Fong B."/>
            <person name="Fujii C.Y."/>
            <person name="Gill J.E."/>
            <person name="Goldsmith A.D."/>
            <person name="Haas B."/>
            <person name="Hansen N.F."/>
            <person name="Hughes B."/>
            <person name="Huizar L."/>
            <person name="Hunter J.L."/>
            <person name="Jenkins J."/>
            <person name="Johnson-Hopson C."/>
            <person name="Khan S."/>
            <person name="Khaykin E."/>
            <person name="Kim C.J."/>
            <person name="Koo H.L."/>
            <person name="Kremenetskaia I."/>
            <person name="Kurtz D.B."/>
            <person name="Kwan A."/>
            <person name="Lam B."/>
            <person name="Langin-Hooper S."/>
            <person name="Lee A."/>
            <person name="Lee J.M."/>
            <person name="Lenz C.A."/>
            <person name="Li J.H."/>
            <person name="Li Y.-P."/>
            <person name="Lin X."/>
            <person name="Liu S.X."/>
            <person name="Liu Z.A."/>
            <person name="Luros J.S."/>
            <person name="Maiti R."/>
            <person name="Marziali A."/>
            <person name="Militscher J."/>
            <person name="Miranda M."/>
            <person name="Nguyen M."/>
            <person name="Nierman W.C."/>
            <person name="Osborne B.I."/>
            <person name="Pai G."/>
            <person name="Peterson J."/>
            <person name="Pham P.K."/>
            <person name="Rizzo M."/>
            <person name="Rooney T."/>
            <person name="Rowley D."/>
            <person name="Sakano H."/>
            <person name="Salzberg S.L."/>
            <person name="Schwartz J.R."/>
            <person name="Shinn P."/>
            <person name="Southwick A.M."/>
            <person name="Sun H."/>
            <person name="Tallon L.J."/>
            <person name="Tambunga G."/>
            <person name="Toriumi M.J."/>
            <person name="Town C.D."/>
            <person name="Utterback T."/>
            <person name="Van Aken S."/>
            <person name="Vaysberg M."/>
            <person name="Vysotskaia V.S."/>
            <person name="Walker M."/>
            <person name="Wu D."/>
            <person name="Yu G."/>
            <person name="Fraser C.M."/>
            <person name="Venter J.C."/>
            <person name="Davis R.W."/>
        </authorList>
    </citation>
    <scope>NUCLEOTIDE SEQUENCE [LARGE SCALE GENOMIC DNA]</scope>
    <source>
        <strain>cv. Columbia</strain>
    </source>
</reference>
<reference key="2">
    <citation type="journal article" date="2017" name="Plant J.">
        <title>Araport11: a complete reannotation of the Arabidopsis thaliana reference genome.</title>
        <authorList>
            <person name="Cheng C.Y."/>
            <person name="Krishnakumar V."/>
            <person name="Chan A.P."/>
            <person name="Thibaud-Nissen F."/>
            <person name="Schobel S."/>
            <person name="Town C.D."/>
        </authorList>
    </citation>
    <scope>GENOME REANNOTATION</scope>
    <source>
        <strain>cv. Columbia</strain>
    </source>
</reference>
<reference key="3">
    <citation type="journal article" date="2002" name="Science">
        <title>Functional annotation of a full-length Arabidopsis cDNA collection.</title>
        <authorList>
            <person name="Seki M."/>
            <person name="Narusaka M."/>
            <person name="Kamiya A."/>
            <person name="Ishida J."/>
            <person name="Satou M."/>
            <person name="Sakurai T."/>
            <person name="Nakajima M."/>
            <person name="Enju A."/>
            <person name="Akiyama K."/>
            <person name="Oono Y."/>
            <person name="Muramatsu M."/>
            <person name="Hayashizaki Y."/>
            <person name="Kawai J."/>
            <person name="Carninci P."/>
            <person name="Itoh M."/>
            <person name="Ishii Y."/>
            <person name="Arakawa T."/>
            <person name="Shibata K."/>
            <person name="Shinagawa A."/>
            <person name="Shinozaki K."/>
        </authorList>
    </citation>
    <scope>NUCLEOTIDE SEQUENCE [LARGE SCALE MRNA]</scope>
    <source>
        <strain>cv. Columbia</strain>
    </source>
</reference>
<reference key="4">
    <citation type="journal article" date="2008" name="BMC Genomics">
        <title>Genome-wide analysis of CCCH zinc finger family in Arabidopsis and rice.</title>
        <authorList>
            <person name="Wang D."/>
            <person name="Guo Y."/>
            <person name="Wu C."/>
            <person name="Yang G."/>
            <person name="Li Y."/>
            <person name="Zheng C."/>
        </authorList>
    </citation>
    <scope>NOMENCLATURE</scope>
</reference>
<accession>Q8GX84</accession>
<accession>Q9LNI9</accession>
<protein>
    <recommendedName>
        <fullName>Zinc finger CCCH domain-containing protein 1</fullName>
        <shortName>AtC3H1</shortName>
    </recommendedName>
</protein>
<dbReference type="EMBL" id="AC023628">
    <property type="protein sequence ID" value="AAF97335.1"/>
    <property type="status" value="ALT_SEQ"/>
    <property type="molecule type" value="Genomic_DNA"/>
</dbReference>
<dbReference type="EMBL" id="CP002684">
    <property type="protein sequence ID" value="AEE27275.1"/>
    <property type="molecule type" value="Genomic_DNA"/>
</dbReference>
<dbReference type="EMBL" id="AK118376">
    <property type="protein sequence ID" value="BAC42988.1"/>
    <property type="molecule type" value="mRNA"/>
</dbReference>
<dbReference type="PIR" id="G86143">
    <property type="entry name" value="G86143"/>
</dbReference>
<dbReference type="RefSeq" id="NP_171642.2">
    <property type="nucleotide sequence ID" value="NM_100017.3"/>
</dbReference>
<dbReference type="BioGRID" id="24202">
    <property type="interactions" value="1"/>
</dbReference>
<dbReference type="FunCoup" id="Q8GX84">
    <property type="interactions" value="3516"/>
</dbReference>
<dbReference type="IntAct" id="Q8GX84">
    <property type="interactions" value="1"/>
</dbReference>
<dbReference type="STRING" id="3702.Q8GX84"/>
<dbReference type="iPTMnet" id="Q8GX84"/>
<dbReference type="PaxDb" id="3702-AT1G01350.1"/>
<dbReference type="ProteomicsDB" id="239087"/>
<dbReference type="EnsemblPlants" id="AT1G01350.1">
    <property type="protein sequence ID" value="AT1G01350.1"/>
    <property type="gene ID" value="AT1G01350"/>
</dbReference>
<dbReference type="GeneID" id="838964"/>
<dbReference type="Gramene" id="AT1G01350.1">
    <property type="protein sequence ID" value="AT1G01350.1"/>
    <property type="gene ID" value="AT1G01350"/>
</dbReference>
<dbReference type="KEGG" id="ath:AT1G01350"/>
<dbReference type="Araport" id="AT1G01350"/>
<dbReference type="TAIR" id="AT1G01350"/>
<dbReference type="eggNOG" id="KOG1813">
    <property type="taxonomic scope" value="Eukaryota"/>
</dbReference>
<dbReference type="HOGENOM" id="CLU_050460_1_2_1"/>
<dbReference type="InParanoid" id="Q8GX84"/>
<dbReference type="OMA" id="WQLEADH"/>
<dbReference type="PhylomeDB" id="Q8GX84"/>
<dbReference type="PRO" id="PR:Q8GX84"/>
<dbReference type="Proteomes" id="UP000006548">
    <property type="component" value="Chromosome 1"/>
</dbReference>
<dbReference type="ExpressionAtlas" id="Q8GX84">
    <property type="expression patterns" value="baseline and differential"/>
</dbReference>
<dbReference type="GO" id="GO:0003677">
    <property type="term" value="F:DNA binding"/>
    <property type="evidence" value="ECO:0007669"/>
    <property type="project" value="UniProtKB-KW"/>
</dbReference>
<dbReference type="GO" id="GO:0008270">
    <property type="term" value="F:zinc ion binding"/>
    <property type="evidence" value="ECO:0007669"/>
    <property type="project" value="UniProtKB-KW"/>
</dbReference>
<dbReference type="CDD" id="cd16539">
    <property type="entry name" value="RING-HC_RNF113A_B"/>
    <property type="match status" value="1"/>
</dbReference>
<dbReference type="FunFam" id="3.30.40.10:FF:000045">
    <property type="entry name" value="RING finger protein 113A"/>
    <property type="match status" value="1"/>
</dbReference>
<dbReference type="Gene3D" id="4.10.1000.10">
    <property type="entry name" value="Zinc finger, CCCH-type"/>
    <property type="match status" value="1"/>
</dbReference>
<dbReference type="Gene3D" id="3.30.40.10">
    <property type="entry name" value="Zinc/RING finger domain, C3HC4 (zinc finger)"/>
    <property type="match status" value="1"/>
</dbReference>
<dbReference type="InterPro" id="IPR039971">
    <property type="entry name" value="CWC24-like"/>
</dbReference>
<dbReference type="InterPro" id="IPR000571">
    <property type="entry name" value="Znf_CCCH"/>
</dbReference>
<dbReference type="InterPro" id="IPR036855">
    <property type="entry name" value="Znf_CCCH_sf"/>
</dbReference>
<dbReference type="InterPro" id="IPR001841">
    <property type="entry name" value="Znf_RING"/>
</dbReference>
<dbReference type="InterPro" id="IPR013083">
    <property type="entry name" value="Znf_RING/FYVE/PHD"/>
</dbReference>
<dbReference type="InterPro" id="IPR017907">
    <property type="entry name" value="Znf_RING_CS"/>
</dbReference>
<dbReference type="PANTHER" id="PTHR12930:SF0">
    <property type="entry name" value="RING FINGER PROTEIN 113B"/>
    <property type="match status" value="1"/>
</dbReference>
<dbReference type="PANTHER" id="PTHR12930">
    <property type="entry name" value="ZINC FINGER PROTEIN 183"/>
    <property type="match status" value="1"/>
</dbReference>
<dbReference type="Pfam" id="PF13920">
    <property type="entry name" value="zf-C3HC4_3"/>
    <property type="match status" value="1"/>
</dbReference>
<dbReference type="Pfam" id="PF00642">
    <property type="entry name" value="zf-CCCH"/>
    <property type="match status" value="1"/>
</dbReference>
<dbReference type="SMART" id="SM00184">
    <property type="entry name" value="RING"/>
    <property type="match status" value="1"/>
</dbReference>
<dbReference type="SMART" id="SM00356">
    <property type="entry name" value="ZnF_C3H1"/>
    <property type="match status" value="1"/>
</dbReference>
<dbReference type="SUPFAM" id="SSF90229">
    <property type="entry name" value="CCCH zinc finger"/>
    <property type="match status" value="1"/>
</dbReference>
<dbReference type="SUPFAM" id="SSF57850">
    <property type="entry name" value="RING/U-box"/>
    <property type="match status" value="1"/>
</dbReference>
<dbReference type="PROSITE" id="PS50103">
    <property type="entry name" value="ZF_C3H1"/>
    <property type="match status" value="1"/>
</dbReference>
<dbReference type="PROSITE" id="PS00518">
    <property type="entry name" value="ZF_RING_1"/>
    <property type="match status" value="1"/>
</dbReference>
<dbReference type="PROSITE" id="PS50089">
    <property type="entry name" value="ZF_RING_2"/>
    <property type="match status" value="1"/>
</dbReference>
<sequence>MSDSGEPKPSQQEEPLPQPAAQETQSQQVCTFFKKPTKSKNIRKRTIDADEEDGDSKSESSILQNLKKVAKPDSKLYFSSGPSKSSTTTSGAPERSVFHYDSSKEIQVQNDSGATATLETETDFNQDARAIRERVLKKADEALKGNKKKASDEKLYKGIHGYTDHKAGFRREQTISSEKAGGSHGPLRASAHIRVSARFDYQPDICKDYKETGYCGYGDSCKFLHDRGDYKPGWQIEKEWEEAEKVRKRNKAMGVEDEDDEADKDSDEDENALPFACFICREPFVDPVVTKCKHYFCEHCALKHHTKNKKCFVCNQPTMGIFNAAHEIKKRMAEERSKAEQGL</sequence>